<evidence type="ECO:0000250" key="1">
    <source>
        <dbReference type="UniProtKB" id="Q9H488"/>
    </source>
</evidence>
<evidence type="ECO:0000255" key="2"/>
<evidence type="ECO:0000255" key="3">
    <source>
        <dbReference type="PROSITE-ProRule" id="PRU00498"/>
    </source>
</evidence>
<evidence type="ECO:0000256" key="4">
    <source>
        <dbReference type="SAM" id="MobiDB-lite"/>
    </source>
</evidence>
<evidence type="ECO:0000305" key="5"/>
<evidence type="ECO:0000312" key="6">
    <source>
        <dbReference type="Araport" id="AT1G20550"/>
    </source>
</evidence>
<evidence type="ECO:0000312" key="7">
    <source>
        <dbReference type="EMBL" id="AAF79608.1"/>
    </source>
</evidence>
<evidence type="ECO:0000312" key="8">
    <source>
        <dbReference type="EMBL" id="AAF80643.1"/>
    </source>
</evidence>
<evidence type="ECO:0000312" key="9">
    <source>
        <dbReference type="EMBL" id="ARJ31406.1"/>
    </source>
</evidence>
<name>OFUT6_ARATH</name>
<organism>
    <name type="scientific">Arabidopsis thaliana</name>
    <name type="common">Mouse-ear cress</name>
    <dbReference type="NCBI Taxonomy" id="3702"/>
    <lineage>
        <taxon>Eukaryota</taxon>
        <taxon>Viridiplantae</taxon>
        <taxon>Streptophyta</taxon>
        <taxon>Embryophyta</taxon>
        <taxon>Tracheophyta</taxon>
        <taxon>Spermatophyta</taxon>
        <taxon>Magnoliopsida</taxon>
        <taxon>eudicotyledons</taxon>
        <taxon>Gunneridae</taxon>
        <taxon>Pentapetalae</taxon>
        <taxon>rosids</taxon>
        <taxon>malvids</taxon>
        <taxon>Brassicales</taxon>
        <taxon>Brassicaceae</taxon>
        <taxon>Camelineae</taxon>
        <taxon>Arabidopsis</taxon>
    </lineage>
</organism>
<comment type="pathway">
    <text evidence="5">Glycan metabolism.</text>
</comment>
<comment type="subcellular location">
    <subcellularLocation>
        <location evidence="2">Membrane</location>
        <topology evidence="5">Single-pass type II membrane protein</topology>
    </subcellularLocation>
</comment>
<comment type="similarity">
    <text evidence="5">Belongs to the glycosyltransferase GT106 family.</text>
</comment>
<comment type="sequence caution" evidence="5">
    <conflict type="erroneous gene model prediction">
        <sequence resource="EMBL-CDS" id="AAF79608"/>
    </conflict>
</comment>
<comment type="sequence caution" evidence="5">
    <conflict type="erroneous gene model prediction">
        <sequence resource="EMBL-CDS" id="AAF80643"/>
    </conflict>
</comment>
<accession>F4HSU3</accession>
<accession>Q9LM96</accession>
<accession>Q9LMW2</accession>
<feature type="chain" id="PRO_0000442069" description="O-fucosyltransferase 6">
    <location>
        <begin position="1"/>
        <end position="564"/>
    </location>
</feature>
<feature type="transmembrane region" description="Helical; Signal-anchor for type II membrane protein" evidence="5">
    <location>
        <begin position="17"/>
        <end position="37"/>
    </location>
</feature>
<feature type="region of interest" description="Disordered" evidence="4">
    <location>
        <begin position="501"/>
        <end position="542"/>
    </location>
</feature>
<feature type="compositionally biased region" description="Basic and acidic residues" evidence="4">
    <location>
        <begin position="501"/>
        <end position="512"/>
    </location>
</feature>
<feature type="compositionally biased region" description="Acidic residues" evidence="4">
    <location>
        <begin position="513"/>
        <end position="532"/>
    </location>
</feature>
<feature type="binding site" evidence="1">
    <location>
        <begin position="277"/>
        <end position="279"/>
    </location>
    <ligand>
        <name>substrate</name>
    </ligand>
</feature>
<feature type="glycosylation site" description="N-linked (GlcNAc...) asparagine" evidence="3">
    <location>
        <position position="95"/>
    </location>
</feature>
<feature type="glycosylation site" description="N-linked (GlcNAc...) asparagine" evidence="3">
    <location>
        <position position="139"/>
    </location>
</feature>
<feature type="glycosylation site" description="N-linked (GlcNAc...) asparagine" evidence="3">
    <location>
        <position position="449"/>
    </location>
</feature>
<feature type="glycosylation site" description="N-linked (GlcNAc...) asparagine" evidence="3">
    <location>
        <position position="540"/>
    </location>
</feature>
<protein>
    <recommendedName>
        <fullName evidence="5">O-fucosyltransferase 6</fullName>
        <shortName evidence="5">O-FucT-6</shortName>
        <ecNumber evidence="5">2.4.1.-</ecNumber>
    </recommendedName>
    <alternativeName>
        <fullName evidence="9">O-fucosyltransferase family protein</fullName>
    </alternativeName>
</protein>
<reference key="1">
    <citation type="submission" date="2017-04" db="EMBL/GenBank/DDBJ databases">
        <title>Arabidopsis glycosyltransferases: an update.</title>
        <authorList>
            <person name="Zeng W."/>
            <person name="Gluza P."/>
            <person name="Heazlewood J."/>
        </authorList>
    </citation>
    <scope>NUCLEOTIDE SEQUENCE [MRNA]</scope>
    <source>
        <strain>cv. Columbia</strain>
    </source>
</reference>
<reference key="2">
    <citation type="journal article" date="2000" name="Nature">
        <title>Sequence and analysis of chromosome 1 of the plant Arabidopsis thaliana.</title>
        <authorList>
            <person name="Theologis A."/>
            <person name="Ecker J.R."/>
            <person name="Palm C.J."/>
            <person name="Federspiel N.A."/>
            <person name="Kaul S."/>
            <person name="White O."/>
            <person name="Alonso J."/>
            <person name="Altafi H."/>
            <person name="Araujo R."/>
            <person name="Bowman C.L."/>
            <person name="Brooks S.Y."/>
            <person name="Buehler E."/>
            <person name="Chan A."/>
            <person name="Chao Q."/>
            <person name="Chen H."/>
            <person name="Cheuk R.F."/>
            <person name="Chin C.W."/>
            <person name="Chung M.K."/>
            <person name="Conn L."/>
            <person name="Conway A.B."/>
            <person name="Conway A.R."/>
            <person name="Creasy T.H."/>
            <person name="Dewar K."/>
            <person name="Dunn P."/>
            <person name="Etgu P."/>
            <person name="Feldblyum T.V."/>
            <person name="Feng J.-D."/>
            <person name="Fong B."/>
            <person name="Fujii C.Y."/>
            <person name="Gill J.E."/>
            <person name="Goldsmith A.D."/>
            <person name="Haas B."/>
            <person name="Hansen N.F."/>
            <person name="Hughes B."/>
            <person name="Huizar L."/>
            <person name="Hunter J.L."/>
            <person name="Jenkins J."/>
            <person name="Johnson-Hopson C."/>
            <person name="Khan S."/>
            <person name="Khaykin E."/>
            <person name="Kim C.J."/>
            <person name="Koo H.L."/>
            <person name="Kremenetskaia I."/>
            <person name="Kurtz D.B."/>
            <person name="Kwan A."/>
            <person name="Lam B."/>
            <person name="Langin-Hooper S."/>
            <person name="Lee A."/>
            <person name="Lee J.M."/>
            <person name="Lenz C.A."/>
            <person name="Li J.H."/>
            <person name="Li Y.-P."/>
            <person name="Lin X."/>
            <person name="Liu S.X."/>
            <person name="Liu Z.A."/>
            <person name="Luros J.S."/>
            <person name="Maiti R."/>
            <person name="Marziali A."/>
            <person name="Militscher J."/>
            <person name="Miranda M."/>
            <person name="Nguyen M."/>
            <person name="Nierman W.C."/>
            <person name="Osborne B.I."/>
            <person name="Pai G."/>
            <person name="Peterson J."/>
            <person name="Pham P.K."/>
            <person name="Rizzo M."/>
            <person name="Rooney T."/>
            <person name="Rowley D."/>
            <person name="Sakano H."/>
            <person name="Salzberg S.L."/>
            <person name="Schwartz J.R."/>
            <person name="Shinn P."/>
            <person name="Southwick A.M."/>
            <person name="Sun H."/>
            <person name="Tallon L.J."/>
            <person name="Tambunga G."/>
            <person name="Toriumi M.J."/>
            <person name="Town C.D."/>
            <person name="Utterback T."/>
            <person name="Van Aken S."/>
            <person name="Vaysberg M."/>
            <person name="Vysotskaia V.S."/>
            <person name="Walker M."/>
            <person name="Wu D."/>
            <person name="Yu G."/>
            <person name="Fraser C.M."/>
            <person name="Venter J.C."/>
            <person name="Davis R.W."/>
        </authorList>
    </citation>
    <scope>NUCLEOTIDE SEQUENCE [LARGE SCALE GENOMIC DNA]</scope>
    <source>
        <strain>cv. Columbia</strain>
    </source>
</reference>
<reference key="3">
    <citation type="journal article" date="2017" name="Plant J.">
        <title>Araport11: a complete reannotation of the Arabidopsis thaliana reference genome.</title>
        <authorList>
            <person name="Cheng C.Y."/>
            <person name="Krishnakumar V."/>
            <person name="Chan A.P."/>
            <person name="Thibaud-Nissen F."/>
            <person name="Schobel S."/>
            <person name="Town C.D."/>
        </authorList>
    </citation>
    <scope>GENOME REANNOTATION</scope>
    <source>
        <strain>cv. Columbia</strain>
    </source>
</reference>
<reference key="4">
    <citation type="journal article" date="2012" name="Front. Plant Sci.">
        <title>Plant glycosyltransferases beyond CAZy: a perspective on DUF families.</title>
        <authorList>
            <person name="Hansen S.F."/>
            <person name="Harholt J."/>
            <person name="Oikawa A."/>
            <person name="Scheller H.V."/>
        </authorList>
    </citation>
    <scope>GENE FAMILY</scope>
    <scope>REVIEW</scope>
</reference>
<reference key="5">
    <citation type="journal article" date="2012" name="PLoS ONE">
        <title>The FRIABLE1 gene product affects cell adhesion in Arabidopsis.</title>
        <authorList>
            <person name="Neumetzler L."/>
            <person name="Humphrey T."/>
            <person name="Lumba S."/>
            <person name="Snyder S."/>
            <person name="Yeats T.H."/>
            <person name="Usadel B."/>
            <person name="Vasilevski A."/>
            <person name="Patel J."/>
            <person name="Rose J.K."/>
            <person name="Persson S."/>
            <person name="Bonetta D."/>
        </authorList>
    </citation>
    <scope>GENE FAMILY</scope>
</reference>
<reference key="6">
    <citation type="journal article" date="2012" name="PLoS ONE">
        <title>Identification of putative rhamnogalacturonan-II specific glycosyltransferases in Arabidopsis using a combination of bioinformatics approaches.</title>
        <authorList>
            <person name="Voxeur A."/>
            <person name="Andre A."/>
            <person name="Breton C."/>
            <person name="Lerouge P."/>
        </authorList>
    </citation>
    <scope>GENE FAMILY</scope>
</reference>
<reference key="7">
    <citation type="journal article" date="2013" name="Plant J.">
        <title>Identification of an additional protein involved in mannan biosynthesis.</title>
        <authorList>
            <person name="Wang Y."/>
            <person name="Mortimer J.C."/>
            <person name="Davis J."/>
            <person name="Dupree P."/>
            <person name="Keegstra K."/>
        </authorList>
    </citation>
    <scope>GENE FAMILY</scope>
</reference>
<reference key="8">
    <citation type="journal article" date="2014" name="Plant J.">
        <title>The plant glycosyltransferase clone collection for functional genomics.</title>
        <authorList>
            <person name="Lao J."/>
            <person name="Oikawa A."/>
            <person name="Bromley J.R."/>
            <person name="McInerney P."/>
            <person name="Suttangkakul A."/>
            <person name="Smith-Moritz A.M."/>
            <person name="Plahar H."/>
            <person name="Chiu T.-Y."/>
            <person name="Gonzalez Fernandez-Nino S.M.G."/>
            <person name="Ebert B."/>
            <person name="Yang F."/>
            <person name="Christiansen K.M."/>
            <person name="Hansen S.F."/>
            <person name="Stonebloom S."/>
            <person name="Adams P.D."/>
            <person name="Ronald P.C."/>
            <person name="Hillson N.J."/>
            <person name="Hadi M.Z."/>
            <person name="Vega-Sanchez M.E."/>
            <person name="Loque D."/>
            <person name="Scheller H.V."/>
            <person name="Heazlewood J.L."/>
        </authorList>
    </citation>
    <scope>WEB RESOURCE</scope>
</reference>
<proteinExistence type="evidence at transcript level"/>
<dbReference type="EC" id="2.4.1.-" evidence="5"/>
<dbReference type="EMBL" id="KY906042">
    <property type="protein sequence ID" value="ARJ31406.1"/>
    <property type="molecule type" value="mRNA"/>
</dbReference>
<dbReference type="EMBL" id="AC027665">
    <property type="protein sequence ID" value="AAF79608.1"/>
    <property type="status" value="ALT_SEQ"/>
    <property type="molecule type" value="Genomic_DNA"/>
</dbReference>
<dbReference type="EMBL" id="AC069251">
    <property type="protein sequence ID" value="AAF80643.1"/>
    <property type="status" value="ALT_SEQ"/>
    <property type="molecule type" value="Genomic_DNA"/>
</dbReference>
<dbReference type="EMBL" id="CP002684">
    <property type="protein sequence ID" value="AEE29985.1"/>
    <property type="molecule type" value="Genomic_DNA"/>
</dbReference>
<dbReference type="RefSeq" id="NP_173479.3">
    <property type="nucleotide sequence ID" value="NM_101905.5"/>
</dbReference>
<dbReference type="FunCoup" id="F4HSU3">
    <property type="interactions" value="757"/>
</dbReference>
<dbReference type="GlyCosmos" id="F4HSU3">
    <property type="glycosylation" value="4 sites, No reported glycans"/>
</dbReference>
<dbReference type="GlyGen" id="F4HSU3">
    <property type="glycosylation" value="4 sites"/>
</dbReference>
<dbReference type="PaxDb" id="3702-AT1G20550.1"/>
<dbReference type="ProteomicsDB" id="250802"/>
<dbReference type="EnsemblPlants" id="AT1G20550.1">
    <property type="protein sequence ID" value="AT1G20550.1"/>
    <property type="gene ID" value="AT1G20550"/>
</dbReference>
<dbReference type="GeneID" id="838643"/>
<dbReference type="Gramene" id="AT1G20550.1">
    <property type="protein sequence ID" value="AT1G20550.1"/>
    <property type="gene ID" value="AT1G20550"/>
</dbReference>
<dbReference type="KEGG" id="ath:AT1G20550"/>
<dbReference type="Araport" id="AT1G20550"/>
<dbReference type="TAIR" id="AT1G20550"/>
<dbReference type="eggNOG" id="ENOG502QRBP">
    <property type="taxonomic scope" value="Eukaryota"/>
</dbReference>
<dbReference type="HOGENOM" id="CLU_018420_6_0_1"/>
<dbReference type="InParanoid" id="F4HSU3"/>
<dbReference type="OMA" id="CICETKG"/>
<dbReference type="OrthoDB" id="1882547at2759"/>
<dbReference type="PRO" id="PR:F4HSU3"/>
<dbReference type="Proteomes" id="UP000006548">
    <property type="component" value="Chromosome 1"/>
</dbReference>
<dbReference type="ExpressionAtlas" id="F4HSU3">
    <property type="expression patterns" value="baseline and differential"/>
</dbReference>
<dbReference type="GO" id="GO:0016020">
    <property type="term" value="C:membrane"/>
    <property type="evidence" value="ECO:0007669"/>
    <property type="project" value="UniProtKB-SubCell"/>
</dbReference>
<dbReference type="GO" id="GO:0016757">
    <property type="term" value="F:glycosyltransferase activity"/>
    <property type="evidence" value="ECO:0007669"/>
    <property type="project" value="UniProtKB-KW"/>
</dbReference>
<dbReference type="GO" id="GO:0006004">
    <property type="term" value="P:fucose metabolic process"/>
    <property type="evidence" value="ECO:0007669"/>
    <property type="project" value="UniProtKB-KW"/>
</dbReference>
<dbReference type="CDD" id="cd11299">
    <property type="entry name" value="O-FucT_plant"/>
    <property type="match status" value="1"/>
</dbReference>
<dbReference type="InterPro" id="IPR024709">
    <property type="entry name" value="FucosylTrfase_pln"/>
</dbReference>
<dbReference type="InterPro" id="IPR019378">
    <property type="entry name" value="GDP-Fuc_O-FucTrfase"/>
</dbReference>
<dbReference type="PANTHER" id="PTHR31818">
    <property type="entry name" value="O-FUCOSYLTRANSFERASE 16"/>
    <property type="match status" value="1"/>
</dbReference>
<dbReference type="PANTHER" id="PTHR31818:SF11">
    <property type="entry name" value="O-FUCOSYLTRANSFERASE 6"/>
    <property type="match status" value="1"/>
</dbReference>
<dbReference type="Pfam" id="PF10250">
    <property type="entry name" value="O-FucT"/>
    <property type="match status" value="1"/>
</dbReference>
<dbReference type="PIRSF" id="PIRSF009360">
    <property type="entry name" value="UCP009360"/>
    <property type="match status" value="1"/>
</dbReference>
<keyword id="KW-0119">Carbohydrate metabolism</keyword>
<keyword id="KW-0294">Fucose metabolism</keyword>
<keyword id="KW-0325">Glycoprotein</keyword>
<keyword id="KW-0328">Glycosyltransferase</keyword>
<keyword id="KW-0472">Membrane</keyword>
<keyword id="KW-1185">Reference proteome</keyword>
<keyword id="KW-0735">Signal-anchor</keyword>
<keyword id="KW-0808">Transferase</keyword>
<keyword id="KW-0812">Transmembrane</keyword>
<keyword id="KW-1133">Transmembrane helix</keyword>
<sequence>MAFQRRRNNYYNRLRRLLPFICAVSGALLILFALLSILSPPPDDSDRRISKHINYGANDEKKNTPVVFTVPRGGGRSDRDIWRSWNAEFFYGCCNASSKFPNAKAITRNDRYLAIATSGGLNQQRTGIVDAVVAARILNATLVIPKLDQKSYWKDASDFSNIFDVDWFMSFLSKDVKIIEKLPQKGGQTWSPRRMRVPRKCNEKCYINRVLPVLQKRHAVQLNKFDYRLSNKLRDDLQKLRCRVNYHALKFTDPILEMGNELVRRMRKRSKHFIALHLRFEPDMLAFSGCYYGGGEKEKKELGTIRRRWKTLHVNNPEKQRRQGRCPLTPEEVGLMLRALGYGSDVHIYVASGEVYGGEKSLAPLKALFPHFYSKDTIATKMELKPFSSYSSRMAALDFLVCDESDVFVTNNNGNMARILAGRRRYFGHKPTIRPNAKKLYKLFMSKENTTWEEFASRVRTFQKGFMGEPKEVRAGKGEFHENPAACICEDTDAKVKAGKMDSRKFGKKEQKEDEDAELSSSETDYEEDQTDLQDRGLYNGTRLDYDDALSVSEEPELEEMLSD</sequence>
<gene>
    <name evidence="5" type="primary">OFUT6</name>
    <name evidence="6" type="ordered locus">At1g20550</name>
    <name evidence="8" type="ORF">F2D10.3</name>
    <name evidence="7" type="ORF">F5M15.1</name>
</gene>